<reference key="1">
    <citation type="journal article" date="2004" name="Nucleic Acids Res.">
        <title>Unique features revealed by the genome sequence of Acinetobacter sp. ADP1, a versatile and naturally transformation competent bacterium.</title>
        <authorList>
            <person name="Barbe V."/>
            <person name="Vallenet D."/>
            <person name="Fonknechten N."/>
            <person name="Kreimeyer A."/>
            <person name="Oztas S."/>
            <person name="Labarre L."/>
            <person name="Cruveiller S."/>
            <person name="Robert C."/>
            <person name="Duprat S."/>
            <person name="Wincker P."/>
            <person name="Ornston L.N."/>
            <person name="Weissenbach J."/>
            <person name="Marliere P."/>
            <person name="Cohen G.N."/>
            <person name="Medigue C."/>
        </authorList>
    </citation>
    <scope>NUCLEOTIDE SEQUENCE [LARGE SCALE GENOMIC DNA]</scope>
    <source>
        <strain>ATCC 33305 / BD413 / ADP1</strain>
    </source>
</reference>
<keyword id="KW-0963">Cytoplasm</keyword>
<keyword id="KW-0226">DNA condensation</keyword>
<keyword id="KW-0238">DNA-binding</keyword>
<keyword id="KW-0408">Iron</keyword>
<keyword id="KW-0409">Iron storage</keyword>
<keyword id="KW-0479">Metal-binding</keyword>
<keyword id="KW-0560">Oxidoreductase</keyword>
<accession>Q6FCX7</accession>
<protein>
    <recommendedName>
        <fullName evidence="1">DNA protection during starvation protein</fullName>
        <ecNumber evidence="1">1.16.-.-</ecNumber>
    </recommendedName>
</protein>
<feature type="chain" id="PRO_0000271580" description="DNA protection during starvation protein">
    <location>
        <begin position="1"/>
        <end position="169"/>
    </location>
</feature>
<feature type="binding site" evidence="1">
    <location>
        <position position="47"/>
    </location>
    <ligand>
        <name>Fe cation</name>
        <dbReference type="ChEBI" id="CHEBI:24875"/>
    </ligand>
</feature>
<feature type="binding site" evidence="1">
    <location>
        <position position="74"/>
    </location>
    <ligand>
        <name>Fe cation</name>
        <dbReference type="ChEBI" id="CHEBI:24875"/>
    </ligand>
</feature>
<feature type="binding site" evidence="1">
    <location>
        <position position="78"/>
    </location>
    <ligand>
        <name>Fe cation</name>
        <dbReference type="ChEBI" id="CHEBI:24875"/>
    </ligand>
</feature>
<evidence type="ECO:0000255" key="1">
    <source>
        <dbReference type="HAMAP-Rule" id="MF_01441"/>
    </source>
</evidence>
<dbReference type="EC" id="1.16.-.-" evidence="1"/>
<dbReference type="EMBL" id="CR543861">
    <property type="protein sequence ID" value="CAG68082.1"/>
    <property type="molecule type" value="Genomic_DNA"/>
</dbReference>
<dbReference type="RefSeq" id="WP_004926115.1">
    <property type="nucleotide sequence ID" value="NC_005966.1"/>
</dbReference>
<dbReference type="SMR" id="Q6FCX7"/>
<dbReference type="STRING" id="202950.GCA_001485005_00975"/>
<dbReference type="GeneID" id="45233633"/>
<dbReference type="KEGG" id="aci:ACIAD1205"/>
<dbReference type="eggNOG" id="COG0783">
    <property type="taxonomic scope" value="Bacteria"/>
</dbReference>
<dbReference type="HOGENOM" id="CLU_098183_1_2_6"/>
<dbReference type="OrthoDB" id="9797687at2"/>
<dbReference type="BioCyc" id="ASP62977:ACIAD_RS05545-MONOMER"/>
<dbReference type="Proteomes" id="UP000000430">
    <property type="component" value="Chromosome"/>
</dbReference>
<dbReference type="GO" id="GO:0005737">
    <property type="term" value="C:cytoplasm"/>
    <property type="evidence" value="ECO:0007669"/>
    <property type="project" value="UniProtKB-SubCell"/>
</dbReference>
<dbReference type="GO" id="GO:0003677">
    <property type="term" value="F:DNA binding"/>
    <property type="evidence" value="ECO:0007669"/>
    <property type="project" value="UniProtKB-UniRule"/>
</dbReference>
<dbReference type="GO" id="GO:0008199">
    <property type="term" value="F:ferric iron binding"/>
    <property type="evidence" value="ECO:0007669"/>
    <property type="project" value="UniProtKB-UniRule"/>
</dbReference>
<dbReference type="GO" id="GO:0016722">
    <property type="term" value="F:oxidoreductase activity, acting on metal ions"/>
    <property type="evidence" value="ECO:0007669"/>
    <property type="project" value="InterPro"/>
</dbReference>
<dbReference type="GO" id="GO:0030261">
    <property type="term" value="P:chromosome condensation"/>
    <property type="evidence" value="ECO:0007669"/>
    <property type="project" value="UniProtKB-KW"/>
</dbReference>
<dbReference type="GO" id="GO:0006879">
    <property type="term" value="P:intracellular iron ion homeostasis"/>
    <property type="evidence" value="ECO:0007669"/>
    <property type="project" value="UniProtKB-KW"/>
</dbReference>
<dbReference type="CDD" id="cd01043">
    <property type="entry name" value="DPS"/>
    <property type="match status" value="1"/>
</dbReference>
<dbReference type="Gene3D" id="1.20.1260.10">
    <property type="match status" value="1"/>
</dbReference>
<dbReference type="HAMAP" id="MF_01441">
    <property type="entry name" value="Dps"/>
    <property type="match status" value="1"/>
</dbReference>
<dbReference type="InterPro" id="IPR002177">
    <property type="entry name" value="DPS_DNA-bd"/>
</dbReference>
<dbReference type="InterPro" id="IPR023188">
    <property type="entry name" value="DPS_DNA-bd_CS"/>
</dbReference>
<dbReference type="InterPro" id="IPR023067">
    <property type="entry name" value="Dps_gammaproteobac"/>
</dbReference>
<dbReference type="InterPro" id="IPR012347">
    <property type="entry name" value="Ferritin-like"/>
</dbReference>
<dbReference type="InterPro" id="IPR009078">
    <property type="entry name" value="Ferritin-like_SF"/>
</dbReference>
<dbReference type="InterPro" id="IPR008331">
    <property type="entry name" value="Ferritin_DPS_dom"/>
</dbReference>
<dbReference type="NCBIfam" id="NF006975">
    <property type="entry name" value="PRK09448.1"/>
    <property type="match status" value="1"/>
</dbReference>
<dbReference type="PANTHER" id="PTHR42932:SF3">
    <property type="entry name" value="DNA PROTECTION DURING STARVATION PROTEIN"/>
    <property type="match status" value="1"/>
</dbReference>
<dbReference type="PANTHER" id="PTHR42932">
    <property type="entry name" value="GENERAL STRESS PROTEIN 20U"/>
    <property type="match status" value="1"/>
</dbReference>
<dbReference type="Pfam" id="PF00210">
    <property type="entry name" value="Ferritin"/>
    <property type="match status" value="1"/>
</dbReference>
<dbReference type="PIRSF" id="PIRSF005900">
    <property type="entry name" value="Dps"/>
    <property type="match status" value="1"/>
</dbReference>
<dbReference type="PRINTS" id="PR01346">
    <property type="entry name" value="HELNAPAPROT"/>
</dbReference>
<dbReference type="SUPFAM" id="SSF47240">
    <property type="entry name" value="Ferritin-like"/>
    <property type="match status" value="1"/>
</dbReference>
<dbReference type="PROSITE" id="PS00818">
    <property type="entry name" value="DPS_1"/>
    <property type="match status" value="1"/>
</dbReference>
<dbReference type="PROSITE" id="PS00819">
    <property type="entry name" value="DPS_2"/>
    <property type="match status" value="1"/>
</dbReference>
<gene>
    <name evidence="1" type="primary">dps</name>
    <name type="ordered locus">ACIAD1205</name>
</gene>
<sequence length="169" mass="18981">MSKSSSKLLKVYTRNNLDPAVKESTVKILNQILANLIDLSLLTKQAHWNMRGSNFIAVHEMLDTFRTSLITHLDNVAERAVQIGGTALGTTQTVSTTSQLSAYPVEIHNVQDHLKELADRYGIVANHLRDTIEEIQDPISEDIIHAALEDLDQYLWFLEANIEQDKTTA</sequence>
<proteinExistence type="inferred from homology"/>
<comment type="function">
    <text evidence="1">During stationary phase, binds the chromosome non-specifically, forming a highly ordered and stable dps-DNA co-crystal within which chromosomal DNA is condensed and protected from diverse damages. It protects DNA from oxidative damage by sequestering intracellular Fe(2+) ion and storing it in the form of Fe(3+) oxyhydroxide mineral, which can be released after reduction. One hydrogen peroxide oxidizes two Fe(2+) ions, which prevents hydroxyl radical production by the Fenton reaction.</text>
</comment>
<comment type="catalytic activity">
    <reaction evidence="1">
        <text>2 Fe(2+) + H2O2 + 2 H(+) = 2 Fe(3+) + 2 H2O</text>
        <dbReference type="Rhea" id="RHEA:48712"/>
        <dbReference type="ChEBI" id="CHEBI:15377"/>
        <dbReference type="ChEBI" id="CHEBI:15378"/>
        <dbReference type="ChEBI" id="CHEBI:16240"/>
        <dbReference type="ChEBI" id="CHEBI:29033"/>
        <dbReference type="ChEBI" id="CHEBI:29034"/>
    </reaction>
</comment>
<comment type="subunit">
    <text evidence="1">Homododecamer. The 12 subunits form a hollow sphere into which the mineral iron core of up to 500 Fe(3+) can be deposited.</text>
</comment>
<comment type="subcellular location">
    <subcellularLocation>
        <location evidence="1">Cytoplasm</location>
    </subcellularLocation>
</comment>
<comment type="similarity">
    <text evidence="1">Belongs to the Dps family.</text>
</comment>
<organism>
    <name type="scientific">Acinetobacter baylyi (strain ATCC 33305 / BD413 / ADP1)</name>
    <dbReference type="NCBI Taxonomy" id="62977"/>
    <lineage>
        <taxon>Bacteria</taxon>
        <taxon>Pseudomonadati</taxon>
        <taxon>Pseudomonadota</taxon>
        <taxon>Gammaproteobacteria</taxon>
        <taxon>Moraxellales</taxon>
        <taxon>Moraxellaceae</taxon>
        <taxon>Acinetobacter</taxon>
    </lineage>
</organism>
<name>DPS_ACIAD</name>